<protein>
    <recommendedName>
        <fullName evidence="1">Ribosome-binding factor A</fullName>
    </recommendedName>
</protein>
<feature type="chain" id="PRO_1000073764" description="Ribosome-binding factor A">
    <location>
        <begin position="1"/>
        <end position="122"/>
    </location>
</feature>
<accession>A5GF87</accession>
<comment type="function">
    <text evidence="1">One of several proteins that assist in the late maturation steps of the functional core of the 30S ribosomal subunit. Associates with free 30S ribosomal subunits (but not with 30S subunits that are part of 70S ribosomes or polysomes). Required for efficient processing of 16S rRNA. May interact with the 5'-terminal helix region of 16S rRNA.</text>
</comment>
<comment type="subunit">
    <text evidence="1">Monomer. Binds 30S ribosomal subunits, but not 50S ribosomal subunits or 70S ribosomes.</text>
</comment>
<comment type="subcellular location">
    <subcellularLocation>
        <location evidence="1">Cytoplasm</location>
    </subcellularLocation>
</comment>
<comment type="similarity">
    <text evidence="1">Belongs to the RbfA family.</text>
</comment>
<proteinExistence type="inferred from homology"/>
<gene>
    <name evidence="1" type="primary">rbfA</name>
    <name type="ordered locus">Gura_1902</name>
</gene>
<keyword id="KW-0963">Cytoplasm</keyword>
<keyword id="KW-1185">Reference proteome</keyword>
<keyword id="KW-0690">Ribosome biogenesis</keyword>
<dbReference type="EMBL" id="CP000698">
    <property type="protein sequence ID" value="ABQ26092.1"/>
    <property type="molecule type" value="Genomic_DNA"/>
</dbReference>
<dbReference type="RefSeq" id="WP_011938795.1">
    <property type="nucleotide sequence ID" value="NC_009483.1"/>
</dbReference>
<dbReference type="SMR" id="A5GF87"/>
<dbReference type="STRING" id="351605.Gura_1902"/>
<dbReference type="KEGG" id="gur:Gura_1902"/>
<dbReference type="HOGENOM" id="CLU_089475_6_3_7"/>
<dbReference type="OrthoDB" id="307788at2"/>
<dbReference type="Proteomes" id="UP000006695">
    <property type="component" value="Chromosome"/>
</dbReference>
<dbReference type="GO" id="GO:0005829">
    <property type="term" value="C:cytosol"/>
    <property type="evidence" value="ECO:0007669"/>
    <property type="project" value="TreeGrafter"/>
</dbReference>
<dbReference type="GO" id="GO:0043024">
    <property type="term" value="F:ribosomal small subunit binding"/>
    <property type="evidence" value="ECO:0007669"/>
    <property type="project" value="TreeGrafter"/>
</dbReference>
<dbReference type="GO" id="GO:0030490">
    <property type="term" value="P:maturation of SSU-rRNA"/>
    <property type="evidence" value="ECO:0007669"/>
    <property type="project" value="UniProtKB-UniRule"/>
</dbReference>
<dbReference type="Gene3D" id="3.30.300.20">
    <property type="match status" value="1"/>
</dbReference>
<dbReference type="HAMAP" id="MF_00003">
    <property type="entry name" value="RbfA"/>
    <property type="match status" value="1"/>
</dbReference>
<dbReference type="InterPro" id="IPR015946">
    <property type="entry name" value="KH_dom-like_a/b"/>
</dbReference>
<dbReference type="InterPro" id="IPR000238">
    <property type="entry name" value="RbfA"/>
</dbReference>
<dbReference type="InterPro" id="IPR023799">
    <property type="entry name" value="RbfA_dom_sf"/>
</dbReference>
<dbReference type="InterPro" id="IPR020053">
    <property type="entry name" value="Ribosome-bd_factorA_CS"/>
</dbReference>
<dbReference type="NCBIfam" id="NF010388">
    <property type="entry name" value="PRK13815.1"/>
    <property type="match status" value="1"/>
</dbReference>
<dbReference type="NCBIfam" id="TIGR00082">
    <property type="entry name" value="rbfA"/>
    <property type="match status" value="1"/>
</dbReference>
<dbReference type="PANTHER" id="PTHR33515">
    <property type="entry name" value="RIBOSOME-BINDING FACTOR A, CHLOROPLASTIC-RELATED"/>
    <property type="match status" value="1"/>
</dbReference>
<dbReference type="PANTHER" id="PTHR33515:SF1">
    <property type="entry name" value="RIBOSOME-BINDING FACTOR A, CHLOROPLASTIC-RELATED"/>
    <property type="match status" value="1"/>
</dbReference>
<dbReference type="Pfam" id="PF02033">
    <property type="entry name" value="RBFA"/>
    <property type="match status" value="1"/>
</dbReference>
<dbReference type="SUPFAM" id="SSF89919">
    <property type="entry name" value="Ribosome-binding factor A, RbfA"/>
    <property type="match status" value="1"/>
</dbReference>
<dbReference type="PROSITE" id="PS01319">
    <property type="entry name" value="RBFA"/>
    <property type="match status" value="1"/>
</dbReference>
<organism>
    <name type="scientific">Geotalea uraniireducens (strain Rf4)</name>
    <name type="common">Geobacter uraniireducens</name>
    <dbReference type="NCBI Taxonomy" id="351605"/>
    <lineage>
        <taxon>Bacteria</taxon>
        <taxon>Pseudomonadati</taxon>
        <taxon>Thermodesulfobacteriota</taxon>
        <taxon>Desulfuromonadia</taxon>
        <taxon>Geobacterales</taxon>
        <taxon>Geobacteraceae</taxon>
        <taxon>Geotalea</taxon>
    </lineage>
</organism>
<evidence type="ECO:0000255" key="1">
    <source>
        <dbReference type="HAMAP-Rule" id="MF_00003"/>
    </source>
</evidence>
<name>RBFA_GEOUR</name>
<sequence>MFKRSEKVAEAVHELISELLVKGLKDPRIGFVTITGVKVTDDMHLATVYFTVIGSDAEKKATEQGLNSARGFIRKEMGKSLRMRYVPDIVFKYDVSVDYGYRIESILKEISSSEQSDDKQDS</sequence>
<reference key="1">
    <citation type="submission" date="2007-05" db="EMBL/GenBank/DDBJ databases">
        <title>Complete sequence of Geobacter uraniireducens Rf4.</title>
        <authorList>
            <consortium name="US DOE Joint Genome Institute"/>
            <person name="Copeland A."/>
            <person name="Lucas S."/>
            <person name="Lapidus A."/>
            <person name="Barry K."/>
            <person name="Detter J.C."/>
            <person name="Glavina del Rio T."/>
            <person name="Hammon N."/>
            <person name="Israni S."/>
            <person name="Dalin E."/>
            <person name="Tice H."/>
            <person name="Pitluck S."/>
            <person name="Chertkov O."/>
            <person name="Brettin T."/>
            <person name="Bruce D."/>
            <person name="Han C."/>
            <person name="Schmutz J."/>
            <person name="Larimer F."/>
            <person name="Land M."/>
            <person name="Hauser L."/>
            <person name="Kyrpides N."/>
            <person name="Mikhailova N."/>
            <person name="Shelobolina E."/>
            <person name="Aklujkar M."/>
            <person name="Lovley D."/>
            <person name="Richardson P."/>
        </authorList>
    </citation>
    <scope>NUCLEOTIDE SEQUENCE [LARGE SCALE GENOMIC DNA]</scope>
    <source>
        <strain>ATCC BAA-1134 / JCM 13001 / Rf4</strain>
    </source>
</reference>